<feature type="chain" id="PRO_0000444619" description="Formylglycine-generating enzyme">
    <location>
        <begin position="1"/>
        <end position="299"/>
    </location>
</feature>
<feature type="binding site" evidence="1">
    <location>
        <position position="263"/>
    </location>
    <ligand>
        <name>Cu cation</name>
        <dbReference type="ChEBI" id="CHEBI:23378"/>
        <note>catalytic</note>
    </ligand>
</feature>
<feature type="binding site" evidence="1">
    <location>
        <position position="268"/>
    </location>
    <ligand>
        <name>Cu cation</name>
        <dbReference type="ChEBI" id="CHEBI:23378"/>
        <note>catalytic</note>
    </ligand>
</feature>
<feature type="mutagenesis site" description="Strongly reduced formylglycine-generating enzyme activity." evidence="2">
    <original>S</original>
    <variation>A</variation>
    <location>
        <position position="260"/>
    </location>
</feature>
<feature type="mutagenesis site" description="Abolished formylglycine-generating enzyme activity." evidence="2">
    <original>C</original>
    <variation>S</variation>
    <location>
        <position position="263"/>
    </location>
</feature>
<feature type="mutagenesis site" description="Abolished formylglycine-generating enzyme activity." evidence="2">
    <original>C</original>
    <variation>S</variation>
    <location>
        <position position="268"/>
    </location>
</feature>
<gene>
    <name evidence="5" type="ordered locus">Rv0712</name>
</gene>
<reference key="1">
    <citation type="journal article" date="1998" name="Nature">
        <title>Deciphering the biology of Mycobacterium tuberculosis from the complete genome sequence.</title>
        <authorList>
            <person name="Cole S.T."/>
            <person name="Brosch R."/>
            <person name="Parkhill J."/>
            <person name="Garnier T."/>
            <person name="Churcher C.M."/>
            <person name="Harris D.E."/>
            <person name="Gordon S.V."/>
            <person name="Eiglmeier K."/>
            <person name="Gas S."/>
            <person name="Barry C.E. III"/>
            <person name="Tekaia F."/>
            <person name="Badcock K."/>
            <person name="Basham D."/>
            <person name="Brown D."/>
            <person name="Chillingworth T."/>
            <person name="Connor R."/>
            <person name="Davies R.M."/>
            <person name="Devlin K."/>
            <person name="Feltwell T."/>
            <person name="Gentles S."/>
            <person name="Hamlin N."/>
            <person name="Holroyd S."/>
            <person name="Hornsby T."/>
            <person name="Jagels K."/>
            <person name="Krogh A."/>
            <person name="McLean J."/>
            <person name="Moule S."/>
            <person name="Murphy L.D."/>
            <person name="Oliver S."/>
            <person name="Osborne J."/>
            <person name="Quail M.A."/>
            <person name="Rajandream M.A."/>
            <person name="Rogers J."/>
            <person name="Rutter S."/>
            <person name="Seeger K."/>
            <person name="Skelton S."/>
            <person name="Squares S."/>
            <person name="Squares R."/>
            <person name="Sulston J.E."/>
            <person name="Taylor K."/>
            <person name="Whitehead S."/>
            <person name="Barrell B.G."/>
        </authorList>
    </citation>
    <scope>NUCLEOTIDE SEQUENCE [LARGE SCALE GENOMIC DNA]</scope>
    <source>
        <strain>ATCC 25618 / H37Rv</strain>
    </source>
</reference>
<reference key="2">
    <citation type="journal article" date="2008" name="J. Biol. Chem.">
        <title>Function and structure of a prokaryotic formylglycine-generating enzyme.</title>
        <authorList>
            <person name="Carlson B.L."/>
            <person name="Ballister E.R."/>
            <person name="Skordalakes E."/>
            <person name="King D.S."/>
            <person name="Breidenbach M.A."/>
            <person name="Gilmore S.A."/>
            <person name="Berger J.M."/>
            <person name="Bertozzi C.R."/>
        </authorList>
    </citation>
    <scope>FUNCTION</scope>
    <scope>PATHWAY</scope>
    <scope>DISRUPTION PHENOTYPE</scope>
    <scope>MUTAGENESIS OF SER-260; CYS-263 AND CYS-268</scope>
</reference>
<reference key="3">
    <citation type="journal article" date="2011" name="Mol. Cell. Proteomics">
        <title>Proteogenomic analysis of Mycobacterium tuberculosis by high resolution mass spectrometry.</title>
        <authorList>
            <person name="Kelkar D.S."/>
            <person name="Kumar D."/>
            <person name="Kumar P."/>
            <person name="Balakrishnan L."/>
            <person name="Muthusamy B."/>
            <person name="Yadav A.K."/>
            <person name="Shrivastava P."/>
            <person name="Marimuthu A."/>
            <person name="Anand S."/>
            <person name="Sundaram H."/>
            <person name="Kingsbury R."/>
            <person name="Harsha H.C."/>
            <person name="Nair B."/>
            <person name="Prasad T.S."/>
            <person name="Chauhan D.S."/>
            <person name="Katoch K."/>
            <person name="Katoch V.M."/>
            <person name="Kumar P."/>
            <person name="Chaerkady R."/>
            <person name="Ramachandran S."/>
            <person name="Dash D."/>
            <person name="Pandey A."/>
        </authorList>
    </citation>
    <scope>IDENTIFICATION BY MASS SPECTROMETRY [LARGE SCALE ANALYSIS]</scope>
</reference>
<sequence>MLTELVDLPGGSFRMGSTRFYPEEAPIHTVTVRAFAVERHPVTNAQFAEFVSATGYVTVAEQPLDPGLYPGVDAADLCPGAMVFCPTAGPVDLRDWRQWWDWVPGACWRHPFGRDSDIADRAGHPVVQVAYPDAVAYARWAGRRLPTEAEWEYAARGGTTATYAWGDQEKPGGMLMANTWQGRFPYRNDGALGWVGTSPVGRFPANGFGLLDMIGNVWEWTTTEFYPHHRIDPPSTACCAPVKLATAADPTISQTLKGGSHLCAPEYCHRYRPAARSPQSQDTATTHIGFRCVADPVSG</sequence>
<keyword id="KW-0186">Copper</keyword>
<keyword id="KW-0479">Metal-binding</keyword>
<keyword id="KW-0560">Oxidoreductase</keyword>
<keyword id="KW-1185">Reference proteome</keyword>
<organism>
    <name type="scientific">Mycobacterium tuberculosis (strain ATCC 25618 / H37Rv)</name>
    <dbReference type="NCBI Taxonomy" id="83332"/>
    <lineage>
        <taxon>Bacteria</taxon>
        <taxon>Bacillati</taxon>
        <taxon>Actinomycetota</taxon>
        <taxon>Actinomycetes</taxon>
        <taxon>Mycobacteriales</taxon>
        <taxon>Mycobacteriaceae</taxon>
        <taxon>Mycobacterium</taxon>
        <taxon>Mycobacterium tuberculosis complex</taxon>
    </lineage>
</organism>
<evidence type="ECO:0000250" key="1">
    <source>
        <dbReference type="UniProtKB" id="D1A7C3"/>
    </source>
</evidence>
<evidence type="ECO:0000269" key="2">
    <source>
    </source>
</evidence>
<evidence type="ECO:0000303" key="3">
    <source>
    </source>
</evidence>
<evidence type="ECO:0000305" key="4"/>
<evidence type="ECO:0000312" key="5">
    <source>
        <dbReference type="EMBL" id="CCP43456.1"/>
    </source>
</evidence>
<name>FGE_MYCTU</name>
<accession>I6Y8I5</accession>
<proteinExistence type="evidence at protein level"/>
<comment type="function">
    <text evidence="2">Oxidase that catalyzes the conversion of cysteine to 3-oxoalanine on target proteins. 3-oxoalanine modification, which is also named formylglycine (fGly), occurs in the maturation of arylsulfatases and some alkaline phosphatases that use the hydrated form of 3-oxoalanine as a catalytic nucleophile.</text>
</comment>
<comment type="catalytic activity">
    <reaction evidence="1">
        <text>L-cysteinyl-[sulfatase] + 2 a thiol + O2 = an organic disulfide + 3-oxo-L-alanyl-[sulfatase] + hydrogen sulfide + H2O + H(+)</text>
        <dbReference type="Rhea" id="RHEA:51152"/>
        <dbReference type="Rhea" id="RHEA-COMP:12900"/>
        <dbReference type="Rhea" id="RHEA-COMP:12901"/>
        <dbReference type="ChEBI" id="CHEBI:15377"/>
        <dbReference type="ChEBI" id="CHEBI:15378"/>
        <dbReference type="ChEBI" id="CHEBI:15379"/>
        <dbReference type="ChEBI" id="CHEBI:29256"/>
        <dbReference type="ChEBI" id="CHEBI:29919"/>
        <dbReference type="ChEBI" id="CHEBI:29950"/>
        <dbReference type="ChEBI" id="CHEBI:35489"/>
        <dbReference type="ChEBI" id="CHEBI:85621"/>
        <dbReference type="EC" id="1.8.3.7"/>
    </reaction>
</comment>
<comment type="cofactor">
    <cofactor evidence="1">
        <name>Cu cation</name>
        <dbReference type="ChEBI" id="CHEBI:23378"/>
    </cofactor>
    <text evidence="1">The catalytic copper is required to activate oxygen and catalyze oxidative C-H activation.</text>
</comment>
<comment type="pathway">
    <text evidence="2">Protein modification; sulfatase oxidation.</text>
</comment>
<comment type="disruption phenotype">
    <text evidence="2">Cells are viable and do not display growth defects. They however show reduced sulfatase activity.</text>
</comment>
<comment type="similarity">
    <text evidence="4">Belongs to the sulfatase-modifying factor family.</text>
</comment>
<protein>
    <recommendedName>
        <fullName evidence="3">Formylglycine-generating enzyme</fullName>
        <shortName evidence="3">FGE</shortName>
        <ecNumber evidence="1">1.8.3.7</ecNumber>
    </recommendedName>
</protein>
<dbReference type="EC" id="1.8.3.7" evidence="1"/>
<dbReference type="EMBL" id="AL123456">
    <property type="protein sequence ID" value="CCP43456.1"/>
    <property type="molecule type" value="Genomic_DNA"/>
</dbReference>
<dbReference type="RefSeq" id="NP_215226.1">
    <property type="nucleotide sequence ID" value="NC_000962.3"/>
</dbReference>
<dbReference type="RefSeq" id="WP_003403610.1">
    <property type="nucleotide sequence ID" value="NZ_NVQJ01000007.1"/>
</dbReference>
<dbReference type="SMR" id="I6Y8I5"/>
<dbReference type="FunCoup" id="I6Y8I5">
    <property type="interactions" value="133"/>
</dbReference>
<dbReference type="STRING" id="83332.Rv0712"/>
<dbReference type="PaxDb" id="83332-Rv0712"/>
<dbReference type="DNASU" id="888346"/>
<dbReference type="GeneID" id="888346"/>
<dbReference type="KEGG" id="mtu:Rv0712"/>
<dbReference type="KEGG" id="mtv:RVBD_0712"/>
<dbReference type="PATRIC" id="fig|83332.111.peg.788"/>
<dbReference type="TubercuList" id="Rv0712"/>
<dbReference type="eggNOG" id="COG1262">
    <property type="taxonomic scope" value="Bacteria"/>
</dbReference>
<dbReference type="InParanoid" id="I6Y8I5"/>
<dbReference type="OrthoDB" id="9768004at2"/>
<dbReference type="PhylomeDB" id="I6Y8I5"/>
<dbReference type="BRENDA" id="1.8.3.7">
    <property type="organism ID" value="3445"/>
</dbReference>
<dbReference type="UniPathway" id="UPA00910"/>
<dbReference type="Proteomes" id="UP000001584">
    <property type="component" value="Chromosome"/>
</dbReference>
<dbReference type="GO" id="GO:0120147">
    <property type="term" value="F:formylglycine-generating oxidase activity"/>
    <property type="evidence" value="ECO:0000314"/>
    <property type="project" value="UniProtKB"/>
</dbReference>
<dbReference type="GO" id="GO:0046872">
    <property type="term" value="F:metal ion binding"/>
    <property type="evidence" value="ECO:0007669"/>
    <property type="project" value="UniProtKB-KW"/>
</dbReference>
<dbReference type="GO" id="GO:0043687">
    <property type="term" value="P:post-translational protein modification"/>
    <property type="evidence" value="ECO:0000314"/>
    <property type="project" value="UniProtKB"/>
</dbReference>
<dbReference type="Gene3D" id="3.90.1580.10">
    <property type="entry name" value="paralog of FGE (formylglycine-generating enzyme)"/>
    <property type="match status" value="1"/>
</dbReference>
<dbReference type="InterPro" id="IPR016187">
    <property type="entry name" value="CTDL_fold"/>
</dbReference>
<dbReference type="InterPro" id="IPR051043">
    <property type="entry name" value="Sulfatase_Mod_Factor_Kinase"/>
</dbReference>
<dbReference type="InterPro" id="IPR005532">
    <property type="entry name" value="SUMF_dom"/>
</dbReference>
<dbReference type="InterPro" id="IPR042095">
    <property type="entry name" value="SUMF_sf"/>
</dbReference>
<dbReference type="PANTHER" id="PTHR23150:SF19">
    <property type="entry name" value="FORMYLGLYCINE-GENERATING ENZYME"/>
    <property type="match status" value="1"/>
</dbReference>
<dbReference type="PANTHER" id="PTHR23150">
    <property type="entry name" value="SULFATASE MODIFYING FACTOR 1, 2"/>
    <property type="match status" value="1"/>
</dbReference>
<dbReference type="Pfam" id="PF03781">
    <property type="entry name" value="FGE-sulfatase"/>
    <property type="match status" value="1"/>
</dbReference>
<dbReference type="SUPFAM" id="SSF56436">
    <property type="entry name" value="C-type lectin-like"/>
    <property type="match status" value="1"/>
</dbReference>